<gene>
    <name type="primary">EPHA4</name>
    <name type="synonym">HEK8</name>
    <name type="synonym">SEK</name>
    <name type="synonym">TYRO1</name>
</gene>
<accession>P54764</accession>
<accession>A8K2P1</accession>
<accession>B2R601</accession>
<accession>B7Z6Q8</accession>
<accession>Q2M380</accession>
<evidence type="ECO:0000250" key="1">
    <source>
        <dbReference type="UniProtKB" id="Q03137"/>
    </source>
</evidence>
<evidence type="ECO:0000255" key="2"/>
<evidence type="ECO:0000255" key="3">
    <source>
        <dbReference type="PROSITE-ProRule" id="PRU00159"/>
    </source>
</evidence>
<evidence type="ECO:0000255" key="4">
    <source>
        <dbReference type="PROSITE-ProRule" id="PRU00184"/>
    </source>
</evidence>
<evidence type="ECO:0000255" key="5">
    <source>
        <dbReference type="PROSITE-ProRule" id="PRU00316"/>
    </source>
</evidence>
<evidence type="ECO:0000255" key="6">
    <source>
        <dbReference type="PROSITE-ProRule" id="PRU00883"/>
    </source>
</evidence>
<evidence type="ECO:0000255" key="7">
    <source>
        <dbReference type="PROSITE-ProRule" id="PRU10028"/>
    </source>
</evidence>
<evidence type="ECO:0000269" key="8">
    <source>
    </source>
</evidence>
<evidence type="ECO:0000269" key="9">
    <source>
    </source>
</evidence>
<evidence type="ECO:0000269" key="10">
    <source>
    </source>
</evidence>
<evidence type="ECO:0000269" key="11">
    <source>
    </source>
</evidence>
<evidence type="ECO:0000269" key="12">
    <source>
    </source>
</evidence>
<evidence type="ECO:0000269" key="13">
    <source>
    </source>
</evidence>
<evidence type="ECO:0000303" key="14">
    <source>
    </source>
</evidence>
<evidence type="ECO:0000305" key="15"/>
<evidence type="ECO:0007829" key="16">
    <source>
        <dbReference type="PDB" id="2LW8"/>
    </source>
</evidence>
<evidence type="ECO:0007829" key="17">
    <source>
        <dbReference type="PDB" id="4M4P"/>
    </source>
</evidence>
<evidence type="ECO:0007829" key="18">
    <source>
        <dbReference type="PDB" id="4M4R"/>
    </source>
</evidence>
<evidence type="ECO:0007829" key="19">
    <source>
        <dbReference type="PDB" id="5JR2"/>
    </source>
</evidence>
<evidence type="ECO:0007829" key="20">
    <source>
        <dbReference type="PDB" id="7OFV"/>
    </source>
</evidence>
<protein>
    <recommendedName>
        <fullName>Ephrin type-A receptor 4</fullName>
        <ecNumber>2.7.10.1</ecNumber>
    </recommendedName>
    <alternativeName>
        <fullName>EPH-like kinase 8</fullName>
        <shortName>EK8</shortName>
        <shortName>hEK8</shortName>
    </alternativeName>
    <alternativeName>
        <fullName>Tyrosine-protein kinase TYRO1</fullName>
    </alternativeName>
    <alternativeName>
        <fullName>Tyrosine-protein kinase receptor SEK</fullName>
    </alternativeName>
</protein>
<organism>
    <name type="scientific">Homo sapiens</name>
    <name type="common">Human</name>
    <dbReference type="NCBI Taxonomy" id="9606"/>
    <lineage>
        <taxon>Eukaryota</taxon>
        <taxon>Metazoa</taxon>
        <taxon>Chordata</taxon>
        <taxon>Craniata</taxon>
        <taxon>Vertebrata</taxon>
        <taxon>Euteleostomi</taxon>
        <taxon>Mammalia</taxon>
        <taxon>Eutheria</taxon>
        <taxon>Euarchontoglires</taxon>
        <taxon>Primates</taxon>
        <taxon>Haplorrhini</taxon>
        <taxon>Catarrhini</taxon>
        <taxon>Hominidae</taxon>
        <taxon>Homo</taxon>
    </lineage>
</organism>
<sequence length="986" mass="109860">MAGIFYFALFSCLFGICDAVTGSRVYPANEVTLLDSRSVQGELGWIASPLEGGWEEVSIMDEKNTPIRTYQVCNVMEPSQNNWLRTDWITREGAQRVYIEIKFTLRDCNSLPGVMGTCKETFNLYYYESDNDKERFIRENQFVKIDTIAADESFTQVDIGDRIMKLNTEIRDVGPLSKKGFYLAFQDVGACIALVSVRVFYKKCPLTVRNLAQFPDTITGADTSSLVEVRGSCVNNSEEKDVPKMYCGADGEWLVPIGNCLCNAGHEERSGECQACKIGYYKALSTDATCAKCPPHSYSVWEGATSCTCDRGFFRADNDAASMPCTRPPSAPLNLISNVNETSVNLEWSSPQNTGGRQDISYNVVCKKCGAGDPSKCRPCGSGVHYTPQQNGLKTTKVSITDLLAHTNYTFEIWAVNGVSKYNPNPDQSVSVTVTTNQAAPSSIALVQAKEVTRYSVALAWLEPDRPNGVILEYEVKYYEKDQNERSYRIVRTAARNTDIKGLNPLTSYVFHVRARTAAGYGDFSEPLEVTTNTVPSRIIGDGANSTVLLVSVSGSVVLVVILIAAFVISRRRSKYSKAKQEADEEKHLNQGVRTYVDPFTYEDPNQAVREFAKEIDASCIKIEKVIGVGEFGEVCSGRLKVPGKREICVAIKTLKAGYTDKQRRDFLSEASIMGQFDHPNIIHLEGVVTKCKPVMIITEYMENGSLDAFLRKNDGRFTVIQLVGMLRGIGSGMKYLSDMSYVHRDLAARNILVNSNLVCKVSDFGMSRVLEDDPEAAYTTRGGKIPIRWTAPEAIAYRKFTSASDVWSYGIVMWEVMSYGERPYWDMSNQDVIKAIEEGYRLPPPMDCPIALHQLMLDCWQKERSDRPKFGQIVNMLDKLIRNPNSLKRTGTESSRPNTALLDPSSPEFSAVVSVGDWLQAIKMDRYKDNFTAAGYTTLEAVVHVNQEDLARIGITAITHQNKILSSVQAMRTQMQQMHGRMVPV</sequence>
<dbReference type="EC" id="2.7.10.1"/>
<dbReference type="EMBL" id="L36645">
    <property type="protein sequence ID" value="AAA74246.1"/>
    <property type="molecule type" value="mRNA"/>
</dbReference>
<dbReference type="EMBL" id="AK290306">
    <property type="protein sequence ID" value="BAF82995.1"/>
    <property type="molecule type" value="mRNA"/>
</dbReference>
<dbReference type="EMBL" id="AK300772">
    <property type="protein sequence ID" value="BAH13344.1"/>
    <property type="molecule type" value="mRNA"/>
</dbReference>
<dbReference type="EMBL" id="AK312380">
    <property type="protein sequence ID" value="BAG35298.1"/>
    <property type="molecule type" value="mRNA"/>
</dbReference>
<dbReference type="EMBL" id="AC010899">
    <property type="status" value="NOT_ANNOTATED_CDS"/>
    <property type="molecule type" value="Genomic_DNA"/>
</dbReference>
<dbReference type="EMBL" id="AC079834">
    <property type="status" value="NOT_ANNOTATED_CDS"/>
    <property type="molecule type" value="Genomic_DNA"/>
</dbReference>
<dbReference type="EMBL" id="BC105000">
    <property type="protein sequence ID" value="AAI05001.1"/>
    <property type="molecule type" value="mRNA"/>
</dbReference>
<dbReference type="EMBL" id="BC105002">
    <property type="protein sequence ID" value="AAI05003.1"/>
    <property type="molecule type" value="mRNA"/>
</dbReference>
<dbReference type="CCDS" id="CCDS2447.1">
    <molecule id="P54764-1"/>
</dbReference>
<dbReference type="PIR" id="I78844">
    <property type="entry name" value="I78844"/>
</dbReference>
<dbReference type="RefSeq" id="NP_001291465.1">
    <molecule id="P54764-1"/>
    <property type="nucleotide sequence ID" value="NM_001304536.2"/>
</dbReference>
<dbReference type="RefSeq" id="NP_001291466.1">
    <molecule id="P54764-2"/>
    <property type="nucleotide sequence ID" value="NM_001304537.2"/>
</dbReference>
<dbReference type="RefSeq" id="NP_004429.1">
    <molecule id="P54764-1"/>
    <property type="nucleotide sequence ID" value="NM_004438.5"/>
</dbReference>
<dbReference type="PDB" id="2LW8">
    <property type="method" value="NMR"/>
    <property type="chains" value="A=29-209"/>
</dbReference>
<dbReference type="PDB" id="2WO1">
    <property type="method" value="X-ray"/>
    <property type="resolution" value="1.85 A"/>
    <property type="chains" value="A/B=30-202"/>
</dbReference>
<dbReference type="PDB" id="2WO2">
    <property type="method" value="X-ray"/>
    <property type="resolution" value="2.45 A"/>
    <property type="chains" value="A=30-202"/>
</dbReference>
<dbReference type="PDB" id="2WO3">
    <property type="method" value="X-ray"/>
    <property type="resolution" value="2.35 A"/>
    <property type="chains" value="A=30-202"/>
</dbReference>
<dbReference type="PDB" id="3CKH">
    <property type="method" value="X-ray"/>
    <property type="resolution" value="2.80 A"/>
    <property type="chains" value="A/B=29-209"/>
</dbReference>
<dbReference type="PDB" id="3GXU">
    <property type="method" value="X-ray"/>
    <property type="resolution" value="2.50 A"/>
    <property type="chains" value="A=29-203"/>
</dbReference>
<dbReference type="PDB" id="4BK4">
    <property type="method" value="X-ray"/>
    <property type="resolution" value="3.65 A"/>
    <property type="chains" value="A/B=20-547"/>
</dbReference>
<dbReference type="PDB" id="4BK5">
    <property type="method" value="X-ray"/>
    <property type="resolution" value="4.00 A"/>
    <property type="chains" value="A=20-547"/>
</dbReference>
<dbReference type="PDB" id="4BKA">
    <property type="method" value="X-ray"/>
    <property type="resolution" value="5.30 A"/>
    <property type="chains" value="A=20-547"/>
</dbReference>
<dbReference type="PDB" id="4BKF">
    <property type="method" value="X-ray"/>
    <property type="resolution" value="4.65 A"/>
    <property type="chains" value="A/B=20-547"/>
</dbReference>
<dbReference type="PDB" id="4M4P">
    <property type="method" value="X-ray"/>
    <property type="resolution" value="2.08 A"/>
    <property type="chains" value="A=27-543"/>
</dbReference>
<dbReference type="PDB" id="4M4R">
    <property type="method" value="X-ray"/>
    <property type="resolution" value="3.13 A"/>
    <property type="chains" value="A/C/E/G=27-543"/>
</dbReference>
<dbReference type="PDB" id="4W4Z">
    <property type="method" value="X-ray"/>
    <property type="resolution" value="2.41 A"/>
    <property type="chains" value="A/B/C/D=29-204"/>
</dbReference>
<dbReference type="PDB" id="4W50">
    <property type="method" value="X-ray"/>
    <property type="resolution" value="2.42 A"/>
    <property type="chains" value="A/B/C/D=29-204"/>
</dbReference>
<dbReference type="PDB" id="5JR2">
    <property type="method" value="X-ray"/>
    <property type="resolution" value="1.75 A"/>
    <property type="chains" value="A/B/C/D=29-204"/>
</dbReference>
<dbReference type="PDB" id="7OFV">
    <property type="method" value="X-ray"/>
    <property type="resolution" value="1.43 A"/>
    <property type="chains" value="A=29-209"/>
</dbReference>
<dbReference type="PDB" id="9CY8">
    <property type="method" value="X-ray"/>
    <property type="resolution" value="2.50 A"/>
    <property type="chains" value="A=29-209"/>
</dbReference>
<dbReference type="PDBsum" id="2LW8"/>
<dbReference type="PDBsum" id="2WO1"/>
<dbReference type="PDBsum" id="2WO2"/>
<dbReference type="PDBsum" id="2WO3"/>
<dbReference type="PDBsum" id="3CKH"/>
<dbReference type="PDBsum" id="3GXU"/>
<dbReference type="PDBsum" id="4BK4"/>
<dbReference type="PDBsum" id="4BK5"/>
<dbReference type="PDBsum" id="4BKA"/>
<dbReference type="PDBsum" id="4BKF"/>
<dbReference type="PDBsum" id="4M4P"/>
<dbReference type="PDBsum" id="4M4R"/>
<dbReference type="PDBsum" id="4W4Z"/>
<dbReference type="PDBsum" id="4W50"/>
<dbReference type="PDBsum" id="5JR2"/>
<dbReference type="PDBsum" id="7OFV"/>
<dbReference type="PDBsum" id="9CY8"/>
<dbReference type="SMR" id="P54764"/>
<dbReference type="BioGRID" id="108357">
    <property type="interactions" value="181"/>
</dbReference>
<dbReference type="CORUM" id="P54764"/>
<dbReference type="DIP" id="DIP-48294N"/>
<dbReference type="FunCoup" id="P54764">
    <property type="interactions" value="911"/>
</dbReference>
<dbReference type="IntAct" id="P54764">
    <property type="interactions" value="180"/>
</dbReference>
<dbReference type="MINT" id="P54764"/>
<dbReference type="STRING" id="9606.ENSP00000281821"/>
<dbReference type="BindingDB" id="P54764"/>
<dbReference type="ChEMBL" id="CHEMBL3988"/>
<dbReference type="DrugBank" id="DB12010">
    <property type="generic name" value="Fostamatinib"/>
</dbReference>
<dbReference type="DrugCentral" id="P54764"/>
<dbReference type="GuidetoPHARMACOLOGY" id="1824"/>
<dbReference type="GlyCosmos" id="P54764">
    <property type="glycosylation" value="4 sites, No reported glycans"/>
</dbReference>
<dbReference type="GlyGen" id="P54764">
    <property type="glycosylation" value="5 sites, 1 N-linked glycan (1 site), 1 O-linked glycan (1 site)"/>
</dbReference>
<dbReference type="iPTMnet" id="P54764"/>
<dbReference type="PhosphoSitePlus" id="P54764"/>
<dbReference type="BioMuta" id="EPHA4"/>
<dbReference type="DMDM" id="1711371"/>
<dbReference type="CPTAC" id="CPTAC-2790"/>
<dbReference type="CPTAC" id="CPTAC-2922"/>
<dbReference type="CPTAC" id="CPTAC-2923"/>
<dbReference type="jPOST" id="P54764"/>
<dbReference type="MassIVE" id="P54764"/>
<dbReference type="PaxDb" id="9606-ENSP00000281821"/>
<dbReference type="PeptideAtlas" id="P54764"/>
<dbReference type="ProteomicsDB" id="56717">
    <molecule id="P54764-1"/>
</dbReference>
<dbReference type="Pumba" id="P54764"/>
<dbReference type="TopDownProteomics" id="P54764-1">
    <molecule id="P54764-1"/>
</dbReference>
<dbReference type="ABCD" id="P54764">
    <property type="antibodies" value="11 sequenced antibodies"/>
</dbReference>
<dbReference type="Antibodypedia" id="34350">
    <property type="antibodies" value="704 antibodies from 38 providers"/>
</dbReference>
<dbReference type="DNASU" id="2043"/>
<dbReference type="Ensembl" id="ENST00000281821.7">
    <molecule id="P54764-1"/>
    <property type="protein sequence ID" value="ENSP00000281821.2"/>
    <property type="gene ID" value="ENSG00000116106.12"/>
</dbReference>
<dbReference type="Ensembl" id="ENST00000409938.5">
    <molecule id="P54764-1"/>
    <property type="protein sequence ID" value="ENSP00000386829.1"/>
    <property type="gene ID" value="ENSG00000116106.12"/>
</dbReference>
<dbReference type="GeneID" id="2043"/>
<dbReference type="KEGG" id="hsa:2043"/>
<dbReference type="MANE-Select" id="ENST00000281821.7">
    <property type="protein sequence ID" value="ENSP00000281821.2"/>
    <property type="RefSeq nucleotide sequence ID" value="NM_004438.5"/>
    <property type="RefSeq protein sequence ID" value="NP_004429.1"/>
</dbReference>
<dbReference type="UCSC" id="uc002vmq.4">
    <molecule id="P54764-1"/>
    <property type="organism name" value="human"/>
</dbReference>
<dbReference type="AGR" id="HGNC:3388"/>
<dbReference type="CTD" id="2043"/>
<dbReference type="DisGeNET" id="2043"/>
<dbReference type="GeneCards" id="EPHA4"/>
<dbReference type="HGNC" id="HGNC:3388">
    <property type="gene designation" value="EPHA4"/>
</dbReference>
<dbReference type="HPA" id="ENSG00000116106">
    <property type="expression patterns" value="Tissue enhanced (brain)"/>
</dbReference>
<dbReference type="MalaCards" id="EPHA4"/>
<dbReference type="MIM" id="602188">
    <property type="type" value="gene"/>
</dbReference>
<dbReference type="neXtProt" id="NX_P54764"/>
<dbReference type="OpenTargets" id="ENSG00000116106"/>
<dbReference type="PharmGKB" id="PA27820"/>
<dbReference type="VEuPathDB" id="HostDB:ENSG00000116106"/>
<dbReference type="eggNOG" id="KOG0196">
    <property type="taxonomic scope" value="Eukaryota"/>
</dbReference>
<dbReference type="GeneTree" id="ENSGT00940000156948"/>
<dbReference type="InParanoid" id="P54764"/>
<dbReference type="OMA" id="YDEHNGE"/>
<dbReference type="OrthoDB" id="4062651at2759"/>
<dbReference type="PAN-GO" id="P54764">
    <property type="GO annotations" value="8 GO annotations based on evolutionary models"/>
</dbReference>
<dbReference type="PhylomeDB" id="P54764"/>
<dbReference type="TreeFam" id="TF315608"/>
<dbReference type="BRENDA" id="2.7.10.1">
    <property type="organism ID" value="2681"/>
</dbReference>
<dbReference type="PathwayCommons" id="P54764"/>
<dbReference type="Reactome" id="R-HSA-2682334">
    <property type="pathway name" value="EPH-Ephrin signaling"/>
</dbReference>
<dbReference type="Reactome" id="R-HSA-3928663">
    <property type="pathway name" value="EPHA-mediated growth cone collapse"/>
</dbReference>
<dbReference type="Reactome" id="R-HSA-3928665">
    <property type="pathway name" value="EPH-ephrin mediated repulsion of cells"/>
</dbReference>
<dbReference type="Reactome" id="R-HSA-9824272">
    <property type="pathway name" value="Somitogenesis"/>
</dbReference>
<dbReference type="SignaLink" id="P54764"/>
<dbReference type="SIGNOR" id="P54764"/>
<dbReference type="BioGRID-ORCS" id="2043">
    <property type="hits" value="17 hits in 1186 CRISPR screens"/>
</dbReference>
<dbReference type="CD-CODE" id="FB4E32DD">
    <property type="entry name" value="Presynaptic clusters and postsynaptic densities"/>
</dbReference>
<dbReference type="ChiTaRS" id="EPHA4">
    <property type="organism name" value="human"/>
</dbReference>
<dbReference type="EvolutionaryTrace" id="P54764"/>
<dbReference type="GeneWiki" id="EPH_receptor_A4"/>
<dbReference type="GenomeRNAi" id="2043"/>
<dbReference type="Pharos" id="P54764">
    <property type="development level" value="Tchem"/>
</dbReference>
<dbReference type="PRO" id="PR:P54764"/>
<dbReference type="Proteomes" id="UP000005640">
    <property type="component" value="Chromosome 2"/>
</dbReference>
<dbReference type="RNAct" id="P54764">
    <property type="molecule type" value="protein"/>
</dbReference>
<dbReference type="Bgee" id="ENSG00000116106">
    <property type="expression patterns" value="Expressed in Brodmann (1909) area 23 and 187 other cell types or tissues"/>
</dbReference>
<dbReference type="ExpressionAtlas" id="P54764">
    <property type="expression patterns" value="baseline and differential"/>
</dbReference>
<dbReference type="GO" id="GO:0005912">
    <property type="term" value="C:adherens junction"/>
    <property type="evidence" value="ECO:0007669"/>
    <property type="project" value="UniProtKB-SubCell"/>
</dbReference>
<dbReference type="GO" id="GO:0030424">
    <property type="term" value="C:axon"/>
    <property type="evidence" value="ECO:0000250"/>
    <property type="project" value="UniProtKB"/>
</dbReference>
<dbReference type="GO" id="GO:0043679">
    <property type="term" value="C:axon terminus"/>
    <property type="evidence" value="ECO:0007669"/>
    <property type="project" value="Ensembl"/>
</dbReference>
<dbReference type="GO" id="GO:0044295">
    <property type="term" value="C:axonal growth cone"/>
    <property type="evidence" value="ECO:0007669"/>
    <property type="project" value="Ensembl"/>
</dbReference>
<dbReference type="GO" id="GO:0009986">
    <property type="term" value="C:cell surface"/>
    <property type="evidence" value="ECO:0007669"/>
    <property type="project" value="Ensembl"/>
</dbReference>
<dbReference type="GO" id="GO:0005737">
    <property type="term" value="C:cytoplasm"/>
    <property type="evidence" value="ECO:0000250"/>
    <property type="project" value="UniProtKB"/>
</dbReference>
<dbReference type="GO" id="GO:0030425">
    <property type="term" value="C:dendrite"/>
    <property type="evidence" value="ECO:0000250"/>
    <property type="project" value="UniProtKB"/>
</dbReference>
<dbReference type="GO" id="GO:0043198">
    <property type="term" value="C:dendritic shaft"/>
    <property type="evidence" value="ECO:0000250"/>
    <property type="project" value="ARUK-UCL"/>
</dbReference>
<dbReference type="GO" id="GO:0043197">
    <property type="term" value="C:dendritic spine"/>
    <property type="evidence" value="ECO:0000250"/>
    <property type="project" value="ARUK-UCL"/>
</dbReference>
<dbReference type="GO" id="GO:0031901">
    <property type="term" value="C:early endosome membrane"/>
    <property type="evidence" value="ECO:0000250"/>
    <property type="project" value="UniProtKB"/>
</dbReference>
<dbReference type="GO" id="GO:0030175">
    <property type="term" value="C:filopodium"/>
    <property type="evidence" value="ECO:0007669"/>
    <property type="project" value="Ensembl"/>
</dbReference>
<dbReference type="GO" id="GO:0098978">
    <property type="term" value="C:glutamatergic synapse"/>
    <property type="evidence" value="ECO:0007669"/>
    <property type="project" value="Ensembl"/>
</dbReference>
<dbReference type="GO" id="GO:0005741">
    <property type="term" value="C:mitochondrial outer membrane"/>
    <property type="evidence" value="ECO:0007669"/>
    <property type="project" value="Ensembl"/>
</dbReference>
<dbReference type="GO" id="GO:0031594">
    <property type="term" value="C:neuromuscular junction"/>
    <property type="evidence" value="ECO:0007669"/>
    <property type="project" value="Ensembl"/>
</dbReference>
<dbReference type="GO" id="GO:0043204">
    <property type="term" value="C:perikaryon"/>
    <property type="evidence" value="ECO:0007669"/>
    <property type="project" value="Ensembl"/>
</dbReference>
<dbReference type="GO" id="GO:0005886">
    <property type="term" value="C:plasma membrane"/>
    <property type="evidence" value="ECO:0000250"/>
    <property type="project" value="UniProtKB"/>
</dbReference>
<dbReference type="GO" id="GO:0098839">
    <property type="term" value="C:postsynaptic density membrane"/>
    <property type="evidence" value="ECO:0007669"/>
    <property type="project" value="UniProtKB-SubCell"/>
</dbReference>
<dbReference type="GO" id="GO:0042734">
    <property type="term" value="C:presynaptic membrane"/>
    <property type="evidence" value="ECO:0007669"/>
    <property type="project" value="Ensembl"/>
</dbReference>
<dbReference type="GO" id="GO:0098685">
    <property type="term" value="C:Schaffer collateral - CA1 synapse"/>
    <property type="evidence" value="ECO:0007669"/>
    <property type="project" value="Ensembl"/>
</dbReference>
<dbReference type="GO" id="GO:0001540">
    <property type="term" value="F:amyloid-beta binding"/>
    <property type="evidence" value="ECO:0000304"/>
    <property type="project" value="ARUK-UCL"/>
</dbReference>
<dbReference type="GO" id="GO:0005524">
    <property type="term" value="F:ATP binding"/>
    <property type="evidence" value="ECO:0007669"/>
    <property type="project" value="UniProtKB-KW"/>
</dbReference>
<dbReference type="GO" id="GO:0097161">
    <property type="term" value="F:DH domain binding"/>
    <property type="evidence" value="ECO:0000314"/>
    <property type="project" value="UniProtKB"/>
</dbReference>
<dbReference type="GO" id="GO:0046875">
    <property type="term" value="F:ephrin receptor binding"/>
    <property type="evidence" value="ECO:0007669"/>
    <property type="project" value="Ensembl"/>
</dbReference>
<dbReference type="GO" id="GO:0005004">
    <property type="term" value="F:GPI-linked ephrin receptor activity"/>
    <property type="evidence" value="ECO:0000250"/>
    <property type="project" value="UniProtKB"/>
</dbReference>
<dbReference type="GO" id="GO:0042802">
    <property type="term" value="F:identical protein binding"/>
    <property type="evidence" value="ECO:0007669"/>
    <property type="project" value="Ensembl"/>
</dbReference>
<dbReference type="GO" id="GO:0016301">
    <property type="term" value="F:kinase activity"/>
    <property type="evidence" value="ECO:0000316"/>
    <property type="project" value="ARUK-UCL"/>
</dbReference>
<dbReference type="GO" id="GO:0042731">
    <property type="term" value="F:PH domain binding"/>
    <property type="evidence" value="ECO:0000353"/>
    <property type="project" value="UniProtKB"/>
</dbReference>
<dbReference type="GO" id="GO:0004672">
    <property type="term" value="F:protein kinase activity"/>
    <property type="evidence" value="ECO:0000314"/>
    <property type="project" value="UniProtKB"/>
</dbReference>
<dbReference type="GO" id="GO:0004713">
    <property type="term" value="F:protein tyrosine kinase activity"/>
    <property type="evidence" value="ECO:0000250"/>
    <property type="project" value="UniProt"/>
</dbReference>
<dbReference type="GO" id="GO:1990782">
    <property type="term" value="F:protein tyrosine kinase binding"/>
    <property type="evidence" value="ECO:0000353"/>
    <property type="project" value="ARUK-UCL"/>
</dbReference>
<dbReference type="GO" id="GO:0005005">
    <property type="term" value="F:transmembrane-ephrin receptor activity"/>
    <property type="evidence" value="ECO:0000250"/>
    <property type="project" value="UniProtKB"/>
</dbReference>
<dbReference type="GO" id="GO:0034332">
    <property type="term" value="P:adherens junction organization"/>
    <property type="evidence" value="ECO:0007669"/>
    <property type="project" value="Ensembl"/>
</dbReference>
<dbReference type="GO" id="GO:0007628">
    <property type="term" value="P:adult walking behavior"/>
    <property type="evidence" value="ECO:0007669"/>
    <property type="project" value="Ensembl"/>
</dbReference>
<dbReference type="GO" id="GO:0007411">
    <property type="term" value="P:axon guidance"/>
    <property type="evidence" value="ECO:0000318"/>
    <property type="project" value="GO_Central"/>
</dbReference>
<dbReference type="GO" id="GO:0007155">
    <property type="term" value="P:cell adhesion"/>
    <property type="evidence" value="ECO:0007669"/>
    <property type="project" value="UniProtKB-KW"/>
</dbReference>
<dbReference type="GO" id="GO:1904646">
    <property type="term" value="P:cellular response to amyloid-beta"/>
    <property type="evidence" value="ECO:0000250"/>
    <property type="project" value="ARUK-UCL"/>
</dbReference>
<dbReference type="GO" id="GO:0090102">
    <property type="term" value="P:cochlea development"/>
    <property type="evidence" value="ECO:0007669"/>
    <property type="project" value="Ensembl"/>
</dbReference>
<dbReference type="GO" id="GO:0021957">
    <property type="term" value="P:corticospinal tract morphogenesis"/>
    <property type="evidence" value="ECO:0000250"/>
    <property type="project" value="UniProtKB"/>
</dbReference>
<dbReference type="GO" id="GO:0048013">
    <property type="term" value="P:ephrin receptor signaling pathway"/>
    <property type="evidence" value="ECO:0000316"/>
    <property type="project" value="ARUK-UCL"/>
</dbReference>
<dbReference type="GO" id="GO:0097156">
    <property type="term" value="P:fasciculation of motor neuron axon"/>
    <property type="evidence" value="ECO:0000250"/>
    <property type="project" value="UniProtKB"/>
</dbReference>
<dbReference type="GO" id="GO:0097155">
    <property type="term" value="P:fasciculation of sensory neuron axon"/>
    <property type="evidence" value="ECO:0000250"/>
    <property type="project" value="UniProtKB"/>
</dbReference>
<dbReference type="GO" id="GO:0008347">
    <property type="term" value="P:glial cell migration"/>
    <property type="evidence" value="ECO:0007669"/>
    <property type="project" value="Ensembl"/>
</dbReference>
<dbReference type="GO" id="GO:0060384">
    <property type="term" value="P:innervation"/>
    <property type="evidence" value="ECO:0007669"/>
    <property type="project" value="Ensembl"/>
</dbReference>
<dbReference type="GO" id="GO:0008045">
    <property type="term" value="P:motor neuron axon guidance"/>
    <property type="evidence" value="ECO:0000250"/>
    <property type="project" value="UniProtKB"/>
</dbReference>
<dbReference type="GO" id="GO:0048681">
    <property type="term" value="P:negative regulation of axon regeneration"/>
    <property type="evidence" value="ECO:0000250"/>
    <property type="project" value="UniProtKB"/>
</dbReference>
<dbReference type="GO" id="GO:0007162">
    <property type="term" value="P:negative regulation of cell adhesion"/>
    <property type="evidence" value="ECO:0000315"/>
    <property type="project" value="ARUK-UCL"/>
</dbReference>
<dbReference type="GO" id="GO:0030336">
    <property type="term" value="P:negative regulation of cell migration"/>
    <property type="evidence" value="ECO:0000315"/>
    <property type="project" value="ARUK-UCL"/>
</dbReference>
<dbReference type="GO" id="GO:1900038">
    <property type="term" value="P:negative regulation of cellular response to hypoxia"/>
    <property type="evidence" value="ECO:0000315"/>
    <property type="project" value="ARUK-UCL"/>
</dbReference>
<dbReference type="GO" id="GO:0010719">
    <property type="term" value="P:negative regulation of epithelial to mesenchymal transition"/>
    <property type="evidence" value="ECO:0000315"/>
    <property type="project" value="ARUK-UCL"/>
</dbReference>
<dbReference type="GO" id="GO:0070373">
    <property type="term" value="P:negative regulation of ERK1 and ERK2 cascade"/>
    <property type="evidence" value="ECO:0000314"/>
    <property type="project" value="ARUK-UCL"/>
</dbReference>
<dbReference type="GO" id="GO:1900272">
    <property type="term" value="P:negative regulation of long-term synaptic potentiation"/>
    <property type="evidence" value="ECO:0000250"/>
    <property type="project" value="ARUK-UCL"/>
</dbReference>
<dbReference type="GO" id="GO:0043524">
    <property type="term" value="P:negative regulation of neuron apoptotic process"/>
    <property type="evidence" value="ECO:0007669"/>
    <property type="project" value="Ensembl"/>
</dbReference>
<dbReference type="GO" id="GO:0010977">
    <property type="term" value="P:negative regulation of neuron projection development"/>
    <property type="evidence" value="ECO:0000250"/>
    <property type="project" value="ARUK-UCL"/>
</dbReference>
<dbReference type="GO" id="GO:1903051">
    <property type="term" value="P:negative regulation of proteolysis involved in protein catabolic process"/>
    <property type="evidence" value="ECO:0000316"/>
    <property type="project" value="ARUK-UCL"/>
</dbReference>
<dbReference type="GO" id="GO:0017148">
    <property type="term" value="P:negative regulation of translation"/>
    <property type="evidence" value="ECO:0000250"/>
    <property type="project" value="UniProt"/>
</dbReference>
<dbReference type="GO" id="GO:0072178">
    <property type="term" value="P:nephric duct morphogenesis"/>
    <property type="evidence" value="ECO:0007669"/>
    <property type="project" value="Ensembl"/>
</dbReference>
<dbReference type="GO" id="GO:0106030">
    <property type="term" value="P:neuron projection fasciculation"/>
    <property type="evidence" value="ECO:0000250"/>
    <property type="project" value="ARUK-UCL"/>
</dbReference>
<dbReference type="GO" id="GO:0097485">
    <property type="term" value="P:neuron projection guidance"/>
    <property type="evidence" value="ECO:0000250"/>
    <property type="project" value="ARUK-UCL"/>
</dbReference>
<dbReference type="GO" id="GO:0018108">
    <property type="term" value="P:peptidyl-tyrosine phosphorylation"/>
    <property type="evidence" value="ECO:0000314"/>
    <property type="project" value="UniProtKB"/>
</dbReference>
<dbReference type="GO" id="GO:1902993">
    <property type="term" value="P:positive regulation of amyloid precursor protein catabolic process"/>
    <property type="evidence" value="ECO:0000316"/>
    <property type="project" value="ARUK-UCL"/>
</dbReference>
<dbReference type="GO" id="GO:1902004">
    <property type="term" value="P:positive regulation of amyloid-beta formation"/>
    <property type="evidence" value="ECO:0000316"/>
    <property type="project" value="ARUK-UCL"/>
</dbReference>
<dbReference type="GO" id="GO:0045785">
    <property type="term" value="P:positive regulation of cell adhesion"/>
    <property type="evidence" value="ECO:0000315"/>
    <property type="project" value="ARUK-UCL"/>
</dbReference>
<dbReference type="GO" id="GO:0030335">
    <property type="term" value="P:positive regulation of cell migration"/>
    <property type="evidence" value="ECO:0000314"/>
    <property type="project" value="ARUK-UCL"/>
</dbReference>
<dbReference type="GO" id="GO:0008284">
    <property type="term" value="P:positive regulation of cell population proliferation"/>
    <property type="evidence" value="ECO:0000316"/>
    <property type="project" value="ARUK-UCL"/>
</dbReference>
<dbReference type="GO" id="GO:0050775">
    <property type="term" value="P:positive regulation of dendrite morphogenesis"/>
    <property type="evidence" value="ECO:0007669"/>
    <property type="project" value="Ensembl"/>
</dbReference>
<dbReference type="GO" id="GO:1902533">
    <property type="term" value="P:positive regulation of intracellular signal transduction"/>
    <property type="evidence" value="ECO:0000250"/>
    <property type="project" value="ARUK-UCL"/>
</dbReference>
<dbReference type="GO" id="GO:0046330">
    <property type="term" value="P:positive regulation of JNK cascade"/>
    <property type="evidence" value="ECO:0007669"/>
    <property type="project" value="Ensembl"/>
</dbReference>
<dbReference type="GO" id="GO:2001108">
    <property type="term" value="P:positive regulation of Rho guanyl-nucleotide exchange factor activity"/>
    <property type="evidence" value="ECO:0000314"/>
    <property type="project" value="UniProtKB"/>
</dbReference>
<dbReference type="GO" id="GO:0046777">
    <property type="term" value="P:protein autophosphorylation"/>
    <property type="evidence" value="ECO:0000314"/>
    <property type="project" value="UniProtKB"/>
</dbReference>
<dbReference type="GO" id="GO:0050821">
    <property type="term" value="P:protein stabilization"/>
    <property type="evidence" value="ECO:0000316"/>
    <property type="project" value="ARUK-UCL"/>
</dbReference>
<dbReference type="GO" id="GO:0048710">
    <property type="term" value="P:regulation of astrocyte differentiation"/>
    <property type="evidence" value="ECO:0000250"/>
    <property type="project" value="UniProtKB"/>
</dbReference>
<dbReference type="GO" id="GO:0050770">
    <property type="term" value="P:regulation of axonogenesis"/>
    <property type="evidence" value="ECO:0000250"/>
    <property type="project" value="UniProtKB"/>
</dbReference>
<dbReference type="GO" id="GO:0061001">
    <property type="term" value="P:regulation of dendritic spine morphogenesis"/>
    <property type="evidence" value="ECO:0000250"/>
    <property type="project" value="UniProtKB"/>
</dbReference>
<dbReference type="GO" id="GO:0043087">
    <property type="term" value="P:regulation of GTPase activity"/>
    <property type="evidence" value="ECO:0000250"/>
    <property type="project" value="UniProtKB"/>
</dbReference>
<dbReference type="GO" id="GO:1905244">
    <property type="term" value="P:regulation of modification of synaptic structure"/>
    <property type="evidence" value="ECO:0000250"/>
    <property type="project" value="ARUK-UCL"/>
</dbReference>
<dbReference type="GO" id="GO:1905806">
    <property type="term" value="P:regulation of synapse pruning"/>
    <property type="evidence" value="ECO:0007669"/>
    <property type="project" value="Ensembl"/>
</dbReference>
<dbReference type="GO" id="GO:0098883">
    <property type="term" value="P:synapse pruning"/>
    <property type="evidence" value="ECO:0007669"/>
    <property type="project" value="Ensembl"/>
</dbReference>
<dbReference type="CDD" id="cd10482">
    <property type="entry name" value="EphR_LBD_A4"/>
    <property type="match status" value="1"/>
</dbReference>
<dbReference type="CDD" id="cd00063">
    <property type="entry name" value="FN3"/>
    <property type="match status" value="2"/>
</dbReference>
<dbReference type="CDD" id="cd05066">
    <property type="entry name" value="PTKc_EphR_A"/>
    <property type="match status" value="1"/>
</dbReference>
<dbReference type="CDD" id="cd09545">
    <property type="entry name" value="SAM_EPH-A4"/>
    <property type="match status" value="1"/>
</dbReference>
<dbReference type="FunFam" id="2.60.40.10:FF:000041">
    <property type="entry name" value="ephrin type-A receptor 3"/>
    <property type="match status" value="1"/>
</dbReference>
<dbReference type="FunFam" id="1.10.150.50:FF:000001">
    <property type="entry name" value="Ephrin type-A receptor 5"/>
    <property type="match status" value="1"/>
</dbReference>
<dbReference type="FunFam" id="1.10.510.10:FF:000019">
    <property type="entry name" value="Ephrin type-A receptor 5"/>
    <property type="match status" value="1"/>
</dbReference>
<dbReference type="FunFam" id="2.10.50.10:FF:000001">
    <property type="entry name" value="Ephrin type-A receptor 5"/>
    <property type="match status" value="1"/>
</dbReference>
<dbReference type="FunFam" id="2.60.40.10:FF:000045">
    <property type="entry name" value="Ephrin type-A receptor 5"/>
    <property type="match status" value="1"/>
</dbReference>
<dbReference type="FunFam" id="2.60.40.1770:FF:000001">
    <property type="entry name" value="Ephrin type-A receptor 5"/>
    <property type="match status" value="1"/>
</dbReference>
<dbReference type="FunFam" id="3.30.200.20:FF:000001">
    <property type="entry name" value="Ephrin type-A receptor 5"/>
    <property type="match status" value="1"/>
</dbReference>
<dbReference type="FunFam" id="2.60.120.260:FF:000001">
    <property type="entry name" value="Ephrin type-A receptor 7"/>
    <property type="match status" value="1"/>
</dbReference>
<dbReference type="Gene3D" id="2.60.40.1770">
    <property type="entry name" value="ephrin a2 ectodomain"/>
    <property type="match status" value="1"/>
</dbReference>
<dbReference type="Gene3D" id="2.60.120.260">
    <property type="entry name" value="Galactose-binding domain-like"/>
    <property type="match status" value="1"/>
</dbReference>
<dbReference type="Gene3D" id="2.60.40.10">
    <property type="entry name" value="Immunoglobulins"/>
    <property type="match status" value="2"/>
</dbReference>
<dbReference type="Gene3D" id="3.30.200.20">
    <property type="entry name" value="Phosphorylase Kinase, domain 1"/>
    <property type="match status" value="1"/>
</dbReference>
<dbReference type="Gene3D" id="1.10.150.50">
    <property type="entry name" value="Transcription Factor, Ets-1"/>
    <property type="match status" value="1"/>
</dbReference>
<dbReference type="Gene3D" id="1.10.510.10">
    <property type="entry name" value="Transferase(Phosphotransferase) domain 1"/>
    <property type="match status" value="1"/>
</dbReference>
<dbReference type="Gene3D" id="2.10.50.10">
    <property type="entry name" value="Tumor Necrosis Factor Receptor, subunit A, domain 2"/>
    <property type="match status" value="1"/>
</dbReference>
<dbReference type="InterPro" id="IPR027936">
    <property type="entry name" value="Eph_TM"/>
</dbReference>
<dbReference type="InterPro" id="IPR034270">
    <property type="entry name" value="EphA4_rcpt_lig-bd"/>
</dbReference>
<dbReference type="InterPro" id="IPR030602">
    <property type="entry name" value="EphA4_SAM"/>
</dbReference>
<dbReference type="InterPro" id="IPR001090">
    <property type="entry name" value="Ephrin_rcpt_lig-bd_dom"/>
</dbReference>
<dbReference type="InterPro" id="IPR050449">
    <property type="entry name" value="Ephrin_rcpt_TKs"/>
</dbReference>
<dbReference type="InterPro" id="IPR003961">
    <property type="entry name" value="FN3_dom"/>
</dbReference>
<dbReference type="InterPro" id="IPR036116">
    <property type="entry name" value="FN3_sf"/>
</dbReference>
<dbReference type="InterPro" id="IPR008979">
    <property type="entry name" value="Galactose-bd-like_sf"/>
</dbReference>
<dbReference type="InterPro" id="IPR013783">
    <property type="entry name" value="Ig-like_fold"/>
</dbReference>
<dbReference type="InterPro" id="IPR011009">
    <property type="entry name" value="Kinase-like_dom_sf"/>
</dbReference>
<dbReference type="InterPro" id="IPR000719">
    <property type="entry name" value="Prot_kinase_dom"/>
</dbReference>
<dbReference type="InterPro" id="IPR017441">
    <property type="entry name" value="Protein_kinase_ATP_BS"/>
</dbReference>
<dbReference type="InterPro" id="IPR001660">
    <property type="entry name" value="SAM"/>
</dbReference>
<dbReference type="InterPro" id="IPR013761">
    <property type="entry name" value="SAM/pointed_sf"/>
</dbReference>
<dbReference type="InterPro" id="IPR001245">
    <property type="entry name" value="Ser-Thr/Tyr_kinase_cat_dom"/>
</dbReference>
<dbReference type="InterPro" id="IPR011641">
    <property type="entry name" value="Tyr-kin_ephrin_A/B_rcpt-like"/>
</dbReference>
<dbReference type="InterPro" id="IPR008266">
    <property type="entry name" value="Tyr_kinase_AS"/>
</dbReference>
<dbReference type="InterPro" id="IPR020635">
    <property type="entry name" value="Tyr_kinase_cat_dom"/>
</dbReference>
<dbReference type="InterPro" id="IPR016257">
    <property type="entry name" value="Tyr_kinase_ephrin_rcpt"/>
</dbReference>
<dbReference type="InterPro" id="IPR001426">
    <property type="entry name" value="Tyr_kinase_rcpt_V_CS"/>
</dbReference>
<dbReference type="PANTHER" id="PTHR46877">
    <property type="entry name" value="EPH RECEPTOR A5"/>
    <property type="match status" value="1"/>
</dbReference>
<dbReference type="PANTHER" id="PTHR46877:SF18">
    <property type="entry name" value="EPHRIN TYPE-A RECEPTOR 4"/>
    <property type="match status" value="1"/>
</dbReference>
<dbReference type="Pfam" id="PF14575">
    <property type="entry name" value="EphA2_TM"/>
    <property type="match status" value="1"/>
</dbReference>
<dbReference type="Pfam" id="PF01404">
    <property type="entry name" value="Ephrin_lbd"/>
    <property type="match status" value="1"/>
</dbReference>
<dbReference type="Pfam" id="PF07699">
    <property type="entry name" value="Ephrin_rec_like"/>
    <property type="match status" value="1"/>
</dbReference>
<dbReference type="Pfam" id="PF00041">
    <property type="entry name" value="fn3"/>
    <property type="match status" value="2"/>
</dbReference>
<dbReference type="Pfam" id="PF07714">
    <property type="entry name" value="PK_Tyr_Ser-Thr"/>
    <property type="match status" value="1"/>
</dbReference>
<dbReference type="Pfam" id="PF07647">
    <property type="entry name" value="SAM_2"/>
    <property type="match status" value="1"/>
</dbReference>
<dbReference type="PIRSF" id="PIRSF000666">
    <property type="entry name" value="TyrPK_ephrin_receptor"/>
    <property type="match status" value="1"/>
</dbReference>
<dbReference type="PRINTS" id="PR00014">
    <property type="entry name" value="FNTYPEIII"/>
</dbReference>
<dbReference type="PRINTS" id="PR00109">
    <property type="entry name" value="TYRKINASE"/>
</dbReference>
<dbReference type="SMART" id="SM00615">
    <property type="entry name" value="EPH_lbd"/>
    <property type="match status" value="1"/>
</dbReference>
<dbReference type="SMART" id="SM01411">
    <property type="entry name" value="Ephrin_rec_like"/>
    <property type="match status" value="1"/>
</dbReference>
<dbReference type="SMART" id="SM00060">
    <property type="entry name" value="FN3"/>
    <property type="match status" value="2"/>
</dbReference>
<dbReference type="SMART" id="SM00220">
    <property type="entry name" value="S_TKc"/>
    <property type="match status" value="1"/>
</dbReference>
<dbReference type="SMART" id="SM00454">
    <property type="entry name" value="SAM"/>
    <property type="match status" value="1"/>
</dbReference>
<dbReference type="SMART" id="SM00219">
    <property type="entry name" value="TyrKc"/>
    <property type="match status" value="1"/>
</dbReference>
<dbReference type="SUPFAM" id="SSF49265">
    <property type="entry name" value="Fibronectin type III"/>
    <property type="match status" value="1"/>
</dbReference>
<dbReference type="SUPFAM" id="SSF49785">
    <property type="entry name" value="Galactose-binding domain-like"/>
    <property type="match status" value="1"/>
</dbReference>
<dbReference type="SUPFAM" id="SSF56112">
    <property type="entry name" value="Protein kinase-like (PK-like)"/>
    <property type="match status" value="1"/>
</dbReference>
<dbReference type="SUPFAM" id="SSF47769">
    <property type="entry name" value="SAM/Pointed domain"/>
    <property type="match status" value="1"/>
</dbReference>
<dbReference type="PROSITE" id="PS51550">
    <property type="entry name" value="EPH_LBD"/>
    <property type="match status" value="1"/>
</dbReference>
<dbReference type="PROSITE" id="PS50853">
    <property type="entry name" value="FN3"/>
    <property type="match status" value="2"/>
</dbReference>
<dbReference type="PROSITE" id="PS00107">
    <property type="entry name" value="PROTEIN_KINASE_ATP"/>
    <property type="match status" value="1"/>
</dbReference>
<dbReference type="PROSITE" id="PS50011">
    <property type="entry name" value="PROTEIN_KINASE_DOM"/>
    <property type="match status" value="1"/>
</dbReference>
<dbReference type="PROSITE" id="PS00109">
    <property type="entry name" value="PROTEIN_KINASE_TYR"/>
    <property type="match status" value="1"/>
</dbReference>
<dbReference type="PROSITE" id="PS00790">
    <property type="entry name" value="RECEPTOR_TYR_KIN_V_1"/>
    <property type="match status" value="1"/>
</dbReference>
<dbReference type="PROSITE" id="PS00791">
    <property type="entry name" value="RECEPTOR_TYR_KIN_V_2"/>
    <property type="match status" value="1"/>
</dbReference>
<dbReference type="PROSITE" id="PS50105">
    <property type="entry name" value="SAM_DOMAIN"/>
    <property type="match status" value="1"/>
</dbReference>
<name>EPHA4_HUMAN</name>
<comment type="function">
    <text evidence="1 8">Receptor tyrosine kinase which binds membrane-bound ephrin family ligands residing on adjacent cells, leading to contact-dependent bidirectional signaling into neighboring cells. The signaling pathway downstream of the receptor is referred to as forward signaling while the signaling pathway downstream of the ephrin ligand is referred to as reverse signaling. Highly promiscuous, it has the unique property among Eph receptors to bind and to be physiologically activated by both GPI-anchored ephrin-A and transmembrane ephrin-B ligands including EFNA1 and EFNB3. Upon activation by ephrin ligands, modulates cell morphology and integrin-dependent cell adhesion through regulation of the Rac, Rap and Rho GTPases activity. Plays an important role in the development of the nervous system controlling different steps of axonal guidance including the establishment of the corticospinal projections. May also control the segregation of motor and sensory axons during neuromuscular circuit development. In addition to its role in axonal guidance plays a role in synaptic plasticity. Activated by EFNA1 phosphorylates CDK5 at 'Tyr-15' which in turn phosphorylates NGEF regulating RHOA and dendritic spine morphogenesis. In the nervous system, also plays a role in repair after injury preventing axonal regeneration and in angiogenesis playing a role in central nervous system vascular formation. Additionally, its promiscuity makes it available to participate in a variety of cell-cell signaling regulating for instance the development of the thymic epithelium. During development of the cochlear organ of Corti, regulates pillar cell separation by forming a ternary complex with ADAM10 and CADH1 which facilitates the cleavage of CADH1 by ADAM10 and disruption of adherens junctions (By similarity). Phosphorylates CAPRIN1, promoting CAPRIN1-dependent formation of a membraneless compartment (By similarity).</text>
</comment>
<comment type="catalytic activity">
    <reaction evidence="7">
        <text>L-tyrosyl-[protein] + ATP = O-phospho-L-tyrosyl-[protein] + ADP + H(+)</text>
        <dbReference type="Rhea" id="RHEA:10596"/>
        <dbReference type="Rhea" id="RHEA-COMP:10136"/>
        <dbReference type="Rhea" id="RHEA-COMP:20101"/>
        <dbReference type="ChEBI" id="CHEBI:15378"/>
        <dbReference type="ChEBI" id="CHEBI:30616"/>
        <dbReference type="ChEBI" id="CHEBI:46858"/>
        <dbReference type="ChEBI" id="CHEBI:61978"/>
        <dbReference type="ChEBI" id="CHEBI:456216"/>
        <dbReference type="EC" id="2.7.10.1"/>
    </reaction>
</comment>
<comment type="subunit">
    <text evidence="1 10 11 12">Heterotetramer upon binding of the ligand. The heterotetramer is composed of an ephrin dimer and a receptor dimer. Oligomerization is probably required to induce biological responses. Interacts (phosphorylated at position Tyr-602) with FYN. Interacts with CDK5, CDK5R1 and NGEF; upon activation by EFNA1 induces NGEF phosphorylation by the kinase CDK5. Interacts with CHN1; effector of EPHA4 in axon guidance linking EPHA4 activation to RAC1 regulation (By similarity). Interacts (via PDZ motif) with SIPA1L1 (via PDZ domain); controls neuronal morphology through regulation of the RAP1 (RAP1A or RAP1B) and RAP2 (RAP2A, RAP2B or RAP2C) GTPases. Forms a ternary complex composed of ADAM10, CADH1 and EPHA4; within the complex, CADH1 is cleaved by ADAM10 which disrupts adherens junctions (By similarity).</text>
</comment>
<comment type="interaction">
    <interactant intactId="EBI-5773557">
        <id>P54764</id>
    </interactant>
    <interactant intactId="EBI-8603210">
        <id>O43921</id>
        <label>EFNA2</label>
    </interactant>
    <organismsDiffer>false</organismsDiffer>
    <experiments>4</experiments>
</comment>
<comment type="interaction">
    <interactant intactId="EBI-5773557">
        <id>P54764</id>
    </interactant>
    <interactant intactId="EBI-5241592">
        <id>P52798</id>
        <label>EFNA4</label>
    </interactant>
    <organismsDiffer>false</organismsDiffer>
    <experiments>2</experiments>
</comment>
<comment type="interaction">
    <interactant intactId="EBI-5773557">
        <id>P54764</id>
    </interactant>
    <interactant intactId="EBI-1753674">
        <id>P52803</id>
        <label>EFNA5</label>
    </interactant>
    <organismsDiffer>false</organismsDiffer>
    <experiments>4</experiments>
</comment>
<comment type="interaction">
    <interactant intactId="EBI-5773557">
        <id>P54764</id>
    </interactant>
    <interactant intactId="EBI-7532268">
        <id>P52799</id>
        <label>EFNB2</label>
    </interactant>
    <organismsDiffer>false</organismsDiffer>
    <experiments>4</experiments>
</comment>
<comment type="interaction">
    <interactant intactId="EBI-5773557">
        <id>P54764</id>
    </interactant>
    <interactant intactId="EBI-3908475">
        <id>Q15768</id>
        <label>EFNB3</label>
    </interactant>
    <organismsDiffer>false</organismsDiffer>
    <experiments>3</experiments>
</comment>
<comment type="interaction">
    <interactant intactId="EBI-5773557">
        <id>P54764</id>
    </interactant>
    <interactant intactId="EBI-1059294">
        <id>P29323</id>
        <label>EPHB2</label>
    </interactant>
    <organismsDiffer>false</organismsDiffer>
    <experiments>3</experiments>
</comment>
<comment type="interaction">
    <interactant intactId="EBI-5773557">
        <id>P54764</id>
    </interactant>
    <interactant intactId="EBI-2115989">
        <id>P07148</id>
        <label>FABP1</label>
    </interactant>
    <organismsDiffer>false</organismsDiffer>
    <experiments>2</experiments>
</comment>
<comment type="interaction">
    <interactant intactId="EBI-5773557">
        <id>P54764</id>
    </interactant>
    <interactant intactId="EBI-723452">
        <id>P11172</id>
        <label>UMPS</label>
    </interactant>
    <organismsDiffer>false</organismsDiffer>
    <experiments>2</experiments>
</comment>
<comment type="subcellular location">
    <subcellularLocation>
        <location evidence="1">Cell membrane</location>
        <topology evidence="1">Single-pass type I membrane protein</topology>
    </subcellularLocation>
    <subcellularLocation>
        <location evidence="1">Cell projection</location>
        <location evidence="1">Axon</location>
    </subcellularLocation>
    <subcellularLocation>
        <location evidence="1">Cell projection</location>
        <location evidence="1">Dendrite</location>
    </subcellularLocation>
    <subcellularLocation>
        <location evidence="1">Postsynaptic density membrane</location>
    </subcellularLocation>
    <subcellularLocation>
        <location evidence="1">Early endosome</location>
    </subcellularLocation>
    <subcellularLocation>
        <location evidence="1">Cell junction</location>
        <location evidence="1">Adherens junction</location>
    </subcellularLocation>
    <text evidence="1">Clustered upon activation and targeted to early endosome.</text>
</comment>
<comment type="alternative products">
    <event type="alternative splicing"/>
    <isoform>
        <id>P54764-1</id>
        <name>1</name>
        <sequence type="displayed"/>
    </isoform>
    <isoform>
        <id>P54764-2</id>
        <name>2</name>
        <sequence type="described" ref="VSP_056016"/>
    </isoform>
</comment>
<comment type="tissue specificity">
    <text evidence="13">Ubiquitous.</text>
</comment>
<comment type="domain">
    <text evidence="1">The protein kinase domain mediates interaction with NGEF.</text>
</comment>
<comment type="similarity">
    <text evidence="3">Belongs to the protein kinase superfamily. Tyr protein kinase family. Ephrin receptor subfamily.</text>
</comment>
<reference key="1">
    <citation type="journal article" date="1995" name="Oncogene">
        <title>cDNA cloning and tissue distribution of five human EPH-like receptor protein-tyrosine kinases.</title>
        <authorList>
            <person name="Fox G.M."/>
            <person name="Holst P.L."/>
            <person name="Chute H.T."/>
            <person name="Lindberg R.A."/>
            <person name="Janssen A.M."/>
            <person name="Basu R."/>
            <person name="Welcher A.A."/>
        </authorList>
    </citation>
    <scope>NUCLEOTIDE SEQUENCE [MRNA] (ISOFORM 1)</scope>
    <scope>TISSUE SPECIFICITY</scope>
    <source>
        <tissue>Fetal brain</tissue>
    </source>
</reference>
<reference key="2">
    <citation type="journal article" date="2004" name="Nat. Genet.">
        <title>Complete sequencing and characterization of 21,243 full-length human cDNAs.</title>
        <authorList>
            <person name="Ota T."/>
            <person name="Suzuki Y."/>
            <person name="Nishikawa T."/>
            <person name="Otsuki T."/>
            <person name="Sugiyama T."/>
            <person name="Irie R."/>
            <person name="Wakamatsu A."/>
            <person name="Hayashi K."/>
            <person name="Sato H."/>
            <person name="Nagai K."/>
            <person name="Kimura K."/>
            <person name="Makita H."/>
            <person name="Sekine M."/>
            <person name="Obayashi M."/>
            <person name="Nishi T."/>
            <person name="Shibahara T."/>
            <person name="Tanaka T."/>
            <person name="Ishii S."/>
            <person name="Yamamoto J."/>
            <person name="Saito K."/>
            <person name="Kawai Y."/>
            <person name="Isono Y."/>
            <person name="Nakamura Y."/>
            <person name="Nagahari K."/>
            <person name="Murakami K."/>
            <person name="Yasuda T."/>
            <person name="Iwayanagi T."/>
            <person name="Wagatsuma M."/>
            <person name="Shiratori A."/>
            <person name="Sudo H."/>
            <person name="Hosoiri T."/>
            <person name="Kaku Y."/>
            <person name="Kodaira H."/>
            <person name="Kondo H."/>
            <person name="Sugawara M."/>
            <person name="Takahashi M."/>
            <person name="Kanda K."/>
            <person name="Yokoi T."/>
            <person name="Furuya T."/>
            <person name="Kikkawa E."/>
            <person name="Omura Y."/>
            <person name="Abe K."/>
            <person name="Kamihara K."/>
            <person name="Katsuta N."/>
            <person name="Sato K."/>
            <person name="Tanikawa M."/>
            <person name="Yamazaki M."/>
            <person name="Ninomiya K."/>
            <person name="Ishibashi T."/>
            <person name="Yamashita H."/>
            <person name="Murakawa K."/>
            <person name="Fujimori K."/>
            <person name="Tanai H."/>
            <person name="Kimata M."/>
            <person name="Watanabe M."/>
            <person name="Hiraoka S."/>
            <person name="Chiba Y."/>
            <person name="Ishida S."/>
            <person name="Ono Y."/>
            <person name="Takiguchi S."/>
            <person name="Watanabe S."/>
            <person name="Yosida M."/>
            <person name="Hotuta T."/>
            <person name="Kusano J."/>
            <person name="Kanehori K."/>
            <person name="Takahashi-Fujii A."/>
            <person name="Hara H."/>
            <person name="Tanase T.-O."/>
            <person name="Nomura Y."/>
            <person name="Togiya S."/>
            <person name="Komai F."/>
            <person name="Hara R."/>
            <person name="Takeuchi K."/>
            <person name="Arita M."/>
            <person name="Imose N."/>
            <person name="Musashino K."/>
            <person name="Yuuki H."/>
            <person name="Oshima A."/>
            <person name="Sasaki N."/>
            <person name="Aotsuka S."/>
            <person name="Yoshikawa Y."/>
            <person name="Matsunawa H."/>
            <person name="Ichihara T."/>
            <person name="Shiohata N."/>
            <person name="Sano S."/>
            <person name="Moriya S."/>
            <person name="Momiyama H."/>
            <person name="Satoh N."/>
            <person name="Takami S."/>
            <person name="Terashima Y."/>
            <person name="Suzuki O."/>
            <person name="Nakagawa S."/>
            <person name="Senoh A."/>
            <person name="Mizoguchi H."/>
            <person name="Goto Y."/>
            <person name="Shimizu F."/>
            <person name="Wakebe H."/>
            <person name="Hishigaki H."/>
            <person name="Watanabe T."/>
            <person name="Sugiyama A."/>
            <person name="Takemoto M."/>
            <person name="Kawakami B."/>
            <person name="Yamazaki M."/>
            <person name="Watanabe K."/>
            <person name="Kumagai A."/>
            <person name="Itakura S."/>
            <person name="Fukuzumi Y."/>
            <person name="Fujimori Y."/>
            <person name="Komiyama M."/>
            <person name="Tashiro H."/>
            <person name="Tanigami A."/>
            <person name="Fujiwara T."/>
            <person name="Ono T."/>
            <person name="Yamada K."/>
            <person name="Fujii Y."/>
            <person name="Ozaki K."/>
            <person name="Hirao M."/>
            <person name="Ohmori Y."/>
            <person name="Kawabata A."/>
            <person name="Hikiji T."/>
            <person name="Kobatake N."/>
            <person name="Inagaki H."/>
            <person name="Ikema Y."/>
            <person name="Okamoto S."/>
            <person name="Okitani R."/>
            <person name="Kawakami T."/>
            <person name="Noguchi S."/>
            <person name="Itoh T."/>
            <person name="Shigeta K."/>
            <person name="Senba T."/>
            <person name="Matsumura K."/>
            <person name="Nakajima Y."/>
            <person name="Mizuno T."/>
            <person name="Morinaga M."/>
            <person name="Sasaki M."/>
            <person name="Togashi T."/>
            <person name="Oyama M."/>
            <person name="Hata H."/>
            <person name="Watanabe M."/>
            <person name="Komatsu T."/>
            <person name="Mizushima-Sugano J."/>
            <person name="Satoh T."/>
            <person name="Shirai Y."/>
            <person name="Takahashi Y."/>
            <person name="Nakagawa K."/>
            <person name="Okumura K."/>
            <person name="Nagase T."/>
            <person name="Nomura N."/>
            <person name="Kikuchi H."/>
            <person name="Masuho Y."/>
            <person name="Yamashita R."/>
            <person name="Nakai K."/>
            <person name="Yada T."/>
            <person name="Nakamura Y."/>
            <person name="Ohara O."/>
            <person name="Isogai T."/>
            <person name="Sugano S."/>
        </authorList>
    </citation>
    <scope>NUCLEOTIDE SEQUENCE [LARGE SCALE MRNA] (ISOFORMS 1 AND 2)</scope>
    <source>
        <tissue>Amygdala</tissue>
        <tissue>Tongue</tissue>
    </source>
</reference>
<reference key="3">
    <citation type="journal article" date="2005" name="Nature">
        <title>Generation and annotation of the DNA sequences of human chromosomes 2 and 4.</title>
        <authorList>
            <person name="Hillier L.W."/>
            <person name="Graves T.A."/>
            <person name="Fulton R.S."/>
            <person name="Fulton L.A."/>
            <person name="Pepin K.H."/>
            <person name="Minx P."/>
            <person name="Wagner-McPherson C."/>
            <person name="Layman D."/>
            <person name="Wylie K."/>
            <person name="Sekhon M."/>
            <person name="Becker M.C."/>
            <person name="Fewell G.A."/>
            <person name="Delehaunty K.D."/>
            <person name="Miner T.L."/>
            <person name="Nash W.E."/>
            <person name="Kremitzki C."/>
            <person name="Oddy L."/>
            <person name="Du H."/>
            <person name="Sun H."/>
            <person name="Bradshaw-Cordum H."/>
            <person name="Ali J."/>
            <person name="Carter J."/>
            <person name="Cordes M."/>
            <person name="Harris A."/>
            <person name="Isak A."/>
            <person name="van Brunt A."/>
            <person name="Nguyen C."/>
            <person name="Du F."/>
            <person name="Courtney L."/>
            <person name="Kalicki J."/>
            <person name="Ozersky P."/>
            <person name="Abbott S."/>
            <person name="Armstrong J."/>
            <person name="Belter E.A."/>
            <person name="Caruso L."/>
            <person name="Cedroni M."/>
            <person name="Cotton M."/>
            <person name="Davidson T."/>
            <person name="Desai A."/>
            <person name="Elliott G."/>
            <person name="Erb T."/>
            <person name="Fronick C."/>
            <person name="Gaige T."/>
            <person name="Haakenson W."/>
            <person name="Haglund K."/>
            <person name="Holmes A."/>
            <person name="Harkins R."/>
            <person name="Kim K."/>
            <person name="Kruchowski S.S."/>
            <person name="Strong C.M."/>
            <person name="Grewal N."/>
            <person name="Goyea E."/>
            <person name="Hou S."/>
            <person name="Levy A."/>
            <person name="Martinka S."/>
            <person name="Mead K."/>
            <person name="McLellan M.D."/>
            <person name="Meyer R."/>
            <person name="Randall-Maher J."/>
            <person name="Tomlinson C."/>
            <person name="Dauphin-Kohlberg S."/>
            <person name="Kozlowicz-Reilly A."/>
            <person name="Shah N."/>
            <person name="Swearengen-Shahid S."/>
            <person name="Snider J."/>
            <person name="Strong J.T."/>
            <person name="Thompson J."/>
            <person name="Yoakum M."/>
            <person name="Leonard S."/>
            <person name="Pearman C."/>
            <person name="Trani L."/>
            <person name="Radionenko M."/>
            <person name="Waligorski J.E."/>
            <person name="Wang C."/>
            <person name="Rock S.M."/>
            <person name="Tin-Wollam A.-M."/>
            <person name="Maupin R."/>
            <person name="Latreille P."/>
            <person name="Wendl M.C."/>
            <person name="Yang S.-P."/>
            <person name="Pohl C."/>
            <person name="Wallis J.W."/>
            <person name="Spieth J."/>
            <person name="Bieri T.A."/>
            <person name="Berkowicz N."/>
            <person name="Nelson J.O."/>
            <person name="Osborne J."/>
            <person name="Ding L."/>
            <person name="Meyer R."/>
            <person name="Sabo A."/>
            <person name="Shotland Y."/>
            <person name="Sinha P."/>
            <person name="Wohldmann P.E."/>
            <person name="Cook L.L."/>
            <person name="Hickenbotham M.T."/>
            <person name="Eldred J."/>
            <person name="Williams D."/>
            <person name="Jones T.A."/>
            <person name="She X."/>
            <person name="Ciccarelli F.D."/>
            <person name="Izaurralde E."/>
            <person name="Taylor J."/>
            <person name="Schmutz J."/>
            <person name="Myers R.M."/>
            <person name="Cox D.R."/>
            <person name="Huang X."/>
            <person name="McPherson J.D."/>
            <person name="Mardis E.R."/>
            <person name="Clifton S.W."/>
            <person name="Warren W.C."/>
            <person name="Chinwalla A.T."/>
            <person name="Eddy S.R."/>
            <person name="Marra M.A."/>
            <person name="Ovcharenko I."/>
            <person name="Furey T.S."/>
            <person name="Miller W."/>
            <person name="Eichler E.E."/>
            <person name="Bork P."/>
            <person name="Suyama M."/>
            <person name="Torrents D."/>
            <person name="Waterston R.H."/>
            <person name="Wilson R.K."/>
        </authorList>
    </citation>
    <scope>NUCLEOTIDE SEQUENCE [LARGE SCALE GENOMIC DNA]</scope>
</reference>
<reference key="4">
    <citation type="journal article" date="2004" name="Genome Res.">
        <title>The status, quality, and expansion of the NIH full-length cDNA project: the Mammalian Gene Collection (MGC).</title>
        <authorList>
            <consortium name="The MGC Project Team"/>
        </authorList>
    </citation>
    <scope>NUCLEOTIDE SEQUENCE [LARGE SCALE MRNA] (ISOFORM 1)</scope>
    <source>
        <tissue>Brain</tissue>
    </source>
</reference>
<reference key="5">
    <citation type="journal article" date="1997" name="Cell">
        <title>Unified nomenclature for Eph family receptors and their ligands, the ephrins.</title>
        <authorList>
            <consortium name="Eph nomenclature committee"/>
        </authorList>
    </citation>
    <scope>NOMENCLATURE</scope>
</reference>
<reference key="6">
    <citation type="journal article" date="2007" name="J. Neurosci.">
        <title>The EphA4 receptor regulates neuronal morphology through SPAR-mediated inactivation of Rap GTPases.</title>
        <authorList>
            <person name="Richter M."/>
            <person name="Murai K.K."/>
            <person name="Bourgin C."/>
            <person name="Pak D.T."/>
            <person name="Pasquale E.B."/>
        </authorList>
    </citation>
    <scope>INTERACTION WITH SIPA1L1</scope>
</reference>
<reference key="7">
    <citation type="journal article" date="2007" name="Nat. Neurosci.">
        <title>Cdk5 regulates EphA4-mediated dendritic spine retraction through an ephexin1-dependent mechanism.</title>
        <authorList>
            <person name="Fu W.Y."/>
            <person name="Chen Y."/>
            <person name="Sahin M."/>
            <person name="Zhao X.S."/>
            <person name="Shi L."/>
            <person name="Bikoff J.B."/>
            <person name="Lai K.O."/>
            <person name="Yung W.H."/>
            <person name="Fu A.K."/>
            <person name="Greenberg M.E."/>
            <person name="Ip N.Y."/>
        </authorList>
    </citation>
    <scope>FUNCTION IN PHOSPHORYLATION OF CDK5</scope>
    <scope>AUTOPHOSPHORYLATION</scope>
</reference>
<reference key="8">
    <citation type="journal article" date="2009" name="Mol. Cell. Proteomics">
        <title>Large-scale proteomics analysis of the human kinome.</title>
        <authorList>
            <person name="Oppermann F.S."/>
            <person name="Gnad F."/>
            <person name="Olsen J.V."/>
            <person name="Hornberger R."/>
            <person name="Greff Z."/>
            <person name="Keri G."/>
            <person name="Mann M."/>
            <person name="Daub H."/>
        </authorList>
    </citation>
    <scope>IDENTIFICATION BY MASS SPECTROMETRY [LARGE SCALE ANALYSIS]</scope>
</reference>
<reference key="9">
    <citation type="journal article" date="2008" name="J. Biol. Chem.">
        <title>Crystal structure and NMR binding reveal that two small molecule antagonists target the high affinity ephrin-binding channel of the EphA4 receptor.</title>
        <authorList>
            <person name="Qin H."/>
            <person name="Shi J."/>
            <person name="Noberini R."/>
            <person name="Pasquale E.B."/>
            <person name="Song J."/>
        </authorList>
    </citation>
    <scope>X-RAY CRYSTALLOGRAPHY (2.80 ANGSTROMS) OF 29-209</scope>
</reference>
<reference key="10">
    <citation type="journal article" date="2009" name="Structure">
        <title>Structural plasticity of EPH receptor A4 facilitates cross-class ephrin signaling.</title>
        <authorList>
            <person name="Bowden T.A."/>
            <person name="Aricescu A.R."/>
            <person name="Nettleship J.E."/>
            <person name="Siebold C."/>
            <person name="Rahman-Huq N."/>
            <person name="Owens R.J."/>
            <person name="Stuart D.I."/>
            <person name="Jones E.Y."/>
        </authorList>
    </citation>
    <scope>X-RAY CRYSTALLOGRAPHY (1.85 ANGSTROMS) OF 30-202 IN COMPLEX WITH EFNA2 OR EFNB2</scope>
    <scope>LIGAND-BINDING</scope>
</reference>
<reference key="11">
    <citation type="journal article" date="2010" name="J. Biol. Chem.">
        <title>Structural characterization of the EphA4-Ephrin-B2 complex reveals new features enabling Eph-ephrin binding promiscuity.</title>
        <authorList>
            <person name="Qin H."/>
            <person name="Noberini R."/>
            <person name="Huan X."/>
            <person name="Shi J."/>
            <person name="Pasquale E.B."/>
            <person name="Song J."/>
        </authorList>
    </citation>
    <scope>X-RAY CRYSTALLOGRAPHY (2.50 ANGSTROMS) OF 29-203 IN COMPLEX WITH EFNB2</scope>
    <scope>MUTAGENESIS OF GLN-40 AND GLU-42</scope>
</reference>
<reference key="12">
    <citation type="journal article" date="2007" name="Nature">
        <title>Patterns of somatic mutation in human cancer genomes.</title>
        <authorList>
            <person name="Greenman C."/>
            <person name="Stephens P."/>
            <person name="Smith R."/>
            <person name="Dalgliesh G.L."/>
            <person name="Hunter C."/>
            <person name="Bignell G."/>
            <person name="Davies H."/>
            <person name="Teague J."/>
            <person name="Butler A."/>
            <person name="Stevens C."/>
            <person name="Edkins S."/>
            <person name="O'Meara S."/>
            <person name="Vastrik I."/>
            <person name="Schmidt E.E."/>
            <person name="Avis T."/>
            <person name="Barthorpe S."/>
            <person name="Bhamra G."/>
            <person name="Buck G."/>
            <person name="Choudhury B."/>
            <person name="Clements J."/>
            <person name="Cole J."/>
            <person name="Dicks E."/>
            <person name="Forbes S."/>
            <person name="Gray K."/>
            <person name="Halliday K."/>
            <person name="Harrison R."/>
            <person name="Hills K."/>
            <person name="Hinton J."/>
            <person name="Jenkinson A."/>
            <person name="Jones D."/>
            <person name="Menzies A."/>
            <person name="Mironenko T."/>
            <person name="Perry J."/>
            <person name="Raine K."/>
            <person name="Richardson D."/>
            <person name="Shepherd R."/>
            <person name="Small A."/>
            <person name="Tofts C."/>
            <person name="Varian J."/>
            <person name="Webb T."/>
            <person name="West S."/>
            <person name="Widaa S."/>
            <person name="Yates A."/>
            <person name="Cahill D.P."/>
            <person name="Louis D.N."/>
            <person name="Goldstraw P."/>
            <person name="Nicholson A.G."/>
            <person name="Brasseur F."/>
            <person name="Looijenga L."/>
            <person name="Weber B.L."/>
            <person name="Chiew Y.-E."/>
            <person name="DeFazio A."/>
            <person name="Greaves M.F."/>
            <person name="Green A.R."/>
            <person name="Campbell P."/>
            <person name="Birney E."/>
            <person name="Easton D.F."/>
            <person name="Chenevix-Trench G."/>
            <person name="Tan M.-H."/>
            <person name="Khoo S.K."/>
            <person name="Teh B.T."/>
            <person name="Yuen S.T."/>
            <person name="Leung S.Y."/>
            <person name="Wooster R."/>
            <person name="Futreal P.A."/>
            <person name="Stratton M.R."/>
        </authorList>
    </citation>
    <scope>VARIANTS [LARGE SCALE ANALYSIS] GLN-269; GLU-370 AND PHE-399</scope>
</reference>
<proteinExistence type="evidence at protein level"/>
<feature type="signal peptide" evidence="2">
    <location>
        <begin position="1"/>
        <end position="19"/>
    </location>
</feature>
<feature type="chain" id="PRO_0000016807" description="Ephrin type-A receptor 4">
    <location>
        <begin position="20"/>
        <end position="986"/>
    </location>
</feature>
<feature type="topological domain" description="Extracellular" evidence="2">
    <location>
        <begin position="20"/>
        <end position="547"/>
    </location>
</feature>
<feature type="transmembrane region" description="Helical" evidence="2">
    <location>
        <begin position="548"/>
        <end position="569"/>
    </location>
</feature>
<feature type="topological domain" description="Cytoplasmic" evidence="2">
    <location>
        <begin position="570"/>
        <end position="986"/>
    </location>
</feature>
<feature type="domain" description="Eph LBD" evidence="6">
    <location>
        <begin position="30"/>
        <end position="209"/>
    </location>
</feature>
<feature type="domain" description="Fibronectin type-III 1" evidence="5">
    <location>
        <begin position="328"/>
        <end position="439"/>
    </location>
</feature>
<feature type="domain" description="Fibronectin type-III 2" evidence="5">
    <location>
        <begin position="440"/>
        <end position="537"/>
    </location>
</feature>
<feature type="domain" description="Protein kinase" evidence="3">
    <location>
        <begin position="621"/>
        <end position="882"/>
    </location>
</feature>
<feature type="domain" description="SAM" evidence="4">
    <location>
        <begin position="911"/>
        <end position="975"/>
    </location>
</feature>
<feature type="short sequence motif" description="PDZ-binding" evidence="2">
    <location>
        <begin position="984"/>
        <end position="986"/>
    </location>
</feature>
<feature type="active site" description="Proton acceptor" evidence="3 7">
    <location>
        <position position="746"/>
    </location>
</feature>
<feature type="binding site" evidence="3">
    <location>
        <begin position="627"/>
        <end position="635"/>
    </location>
    <ligand>
        <name>ATP</name>
        <dbReference type="ChEBI" id="CHEBI:30616"/>
    </ligand>
</feature>
<feature type="binding site" evidence="3">
    <location>
        <position position="653"/>
    </location>
    <ligand>
        <name>ATP</name>
        <dbReference type="ChEBI" id="CHEBI:30616"/>
    </ligand>
</feature>
<feature type="modified residue" description="Phosphotyrosine; by autocatalysis" evidence="1">
    <location>
        <position position="596"/>
    </location>
</feature>
<feature type="modified residue" description="Phosphotyrosine; by autocatalysis" evidence="1">
    <location>
        <position position="602"/>
    </location>
</feature>
<feature type="modified residue" description="Phosphotyrosine; by autocatalysis" evidence="2">
    <location>
        <position position="779"/>
    </location>
</feature>
<feature type="modified residue" description="Phosphotyrosine; by autocatalysis" evidence="2">
    <location>
        <position position="928"/>
    </location>
</feature>
<feature type="glycosylation site" description="N-linked (GlcNAc...) asparagine" evidence="2">
    <location>
        <position position="235"/>
    </location>
</feature>
<feature type="glycosylation site" description="N-linked (GlcNAc...) asparagine" evidence="2">
    <location>
        <position position="340"/>
    </location>
</feature>
<feature type="glycosylation site" description="N-linked (GlcNAc...) asparagine" evidence="2">
    <location>
        <position position="408"/>
    </location>
</feature>
<feature type="glycosylation site" description="N-linked (GlcNAc...) asparagine" evidence="2">
    <location>
        <position position="545"/>
    </location>
</feature>
<feature type="splice variant" id="VSP_056016" description="In isoform 2." evidence="14">
    <original>MAGIFYFALFSCLFGICDAVTGSRVYPANEVTLLDSRSVQGELGWIASPLEGG</original>
    <variation>MK</variation>
    <location>
        <begin position="1"/>
        <end position="53"/>
    </location>
</feature>
<feature type="sequence variant" id="VAR_042135" description="In dbSNP:rs35084379." evidence="9">
    <original>R</original>
    <variation>Q</variation>
    <location>
        <position position="269"/>
    </location>
</feature>
<feature type="sequence variant" id="VAR_042136" description="In a bladder carcinoma NOS sample; somatic mutation; dbSNP:rs756952113." evidence="9">
    <original>G</original>
    <variation>E</variation>
    <location>
        <position position="370"/>
    </location>
</feature>
<feature type="sequence variant" id="VAR_042137" description="In a metastatic melanoma sample; somatic mutation; dbSNP:rs868224085." evidence="9">
    <original>S</original>
    <variation>F</variation>
    <location>
        <position position="399"/>
    </location>
</feature>
<feature type="sequence variant" id="VAR_049721" description="In dbSNP:rs35341687.">
    <original>R</original>
    <variation>K</variation>
    <location>
        <position position="953"/>
    </location>
</feature>
<feature type="mutagenesis site" description="10-fold reduced affinity for EFNB2; when associated with A-42." evidence="12">
    <original>Q</original>
    <variation>A</variation>
    <location>
        <position position="40"/>
    </location>
</feature>
<feature type="mutagenesis site" description="10-fold reduced affinity for EFNB2; when associated with A-40." evidence="12">
    <original>E</original>
    <variation>A</variation>
    <location>
        <position position="42"/>
    </location>
</feature>
<feature type="sequence conflict" description="In Ref. 2; BAF82995." evidence="15" ref="2">
    <original>Q</original>
    <variation>P</variation>
    <location>
        <position position="71"/>
    </location>
</feature>
<feature type="sequence conflict" description="In Ref. 2; BAF82995." evidence="15" ref="2">
    <original>K</original>
    <variation>R</variation>
    <location>
        <position position="102"/>
    </location>
</feature>
<feature type="sequence conflict" description="In Ref. 2; BAG35298." evidence="15" ref="2">
    <original>I</original>
    <variation>V</variation>
    <location>
        <position position="137"/>
    </location>
</feature>
<feature type="sequence conflict" description="In Ref. 2; BAF82995." evidence="15" ref="2">
    <original>Y</original>
    <variation>H</variation>
    <location>
        <position position="362"/>
    </location>
</feature>
<feature type="strand" evidence="20">
    <location>
        <begin position="29"/>
        <end position="35"/>
    </location>
</feature>
<feature type="helix" evidence="20">
    <location>
        <begin position="36"/>
        <end position="38"/>
    </location>
</feature>
<feature type="turn" evidence="18">
    <location>
        <begin position="40"/>
        <end position="42"/>
    </location>
</feature>
<feature type="strand" evidence="20">
    <location>
        <begin position="46"/>
        <end position="53"/>
    </location>
</feature>
<feature type="strand" evidence="20">
    <location>
        <begin position="55"/>
        <end position="60"/>
    </location>
</feature>
<feature type="strand" evidence="16">
    <location>
        <begin position="62"/>
        <end position="65"/>
    </location>
</feature>
<feature type="strand" evidence="20">
    <location>
        <begin position="66"/>
        <end position="72"/>
    </location>
</feature>
<feature type="strand" evidence="19">
    <location>
        <begin position="77"/>
        <end position="79"/>
    </location>
</feature>
<feature type="strand" evidence="20">
    <location>
        <begin position="82"/>
        <end position="85"/>
    </location>
</feature>
<feature type="strand" evidence="16">
    <location>
        <begin position="93"/>
        <end position="96"/>
    </location>
</feature>
<feature type="strand" evidence="20">
    <location>
        <begin position="97"/>
        <end position="105"/>
    </location>
</feature>
<feature type="helix" evidence="20">
    <location>
        <begin position="108"/>
        <end position="110"/>
    </location>
</feature>
<feature type="strand" evidence="20">
    <location>
        <begin position="114"/>
        <end position="116"/>
    </location>
</feature>
<feature type="strand" evidence="20">
    <location>
        <begin position="119"/>
        <end position="130"/>
    </location>
</feature>
<feature type="strand" evidence="16">
    <location>
        <begin position="131"/>
        <end position="133"/>
    </location>
</feature>
<feature type="helix" evidence="20">
    <location>
        <begin position="139"/>
        <end position="141"/>
    </location>
</feature>
<feature type="strand" evidence="20">
    <location>
        <begin position="142"/>
        <end position="149"/>
    </location>
</feature>
<feature type="strand" evidence="20">
    <location>
        <begin position="154"/>
        <end position="159"/>
    </location>
</feature>
<feature type="strand" evidence="20">
    <location>
        <begin position="162"/>
        <end position="173"/>
    </location>
</feature>
<feature type="strand" evidence="20">
    <location>
        <begin position="178"/>
        <end position="190"/>
    </location>
</feature>
<feature type="strand" evidence="20">
    <location>
        <begin position="192"/>
        <end position="203"/>
    </location>
</feature>
<feature type="strand" evidence="17">
    <location>
        <begin position="207"/>
        <end position="209"/>
    </location>
</feature>
<feature type="strand" evidence="17">
    <location>
        <begin position="212"/>
        <end position="214"/>
    </location>
</feature>
<feature type="strand" evidence="17">
    <location>
        <begin position="226"/>
        <end position="230"/>
    </location>
</feature>
<feature type="strand" evidence="17">
    <location>
        <begin position="237"/>
        <end position="248"/>
    </location>
</feature>
<feature type="strand" evidence="17">
    <location>
        <begin position="257"/>
        <end position="262"/>
    </location>
</feature>
<feature type="strand" evidence="17">
    <location>
        <begin position="266"/>
        <end position="269"/>
    </location>
</feature>
<feature type="strand" evidence="17">
    <location>
        <begin position="272"/>
        <end position="275"/>
    </location>
</feature>
<feature type="strand" evidence="18">
    <location>
        <begin position="304"/>
        <end position="306"/>
    </location>
</feature>
<feature type="strand" evidence="17">
    <location>
        <begin position="333"/>
        <end position="340"/>
    </location>
</feature>
<feature type="strand" evidence="17">
    <location>
        <begin position="343"/>
        <end position="349"/>
    </location>
</feature>
<feature type="strand" evidence="17">
    <location>
        <begin position="361"/>
        <end position="368"/>
    </location>
</feature>
<feature type="turn" evidence="18">
    <location>
        <begin position="373"/>
        <end position="375"/>
    </location>
</feature>
<feature type="strand" evidence="17">
    <location>
        <begin position="385"/>
        <end position="388"/>
    </location>
</feature>
<feature type="strand" evidence="17">
    <location>
        <begin position="390"/>
        <end position="393"/>
    </location>
</feature>
<feature type="strand" evidence="17">
    <location>
        <begin position="395"/>
        <end position="401"/>
    </location>
</feature>
<feature type="strand" evidence="17">
    <location>
        <begin position="405"/>
        <end position="416"/>
    </location>
</feature>
<feature type="strand" evidence="17">
    <location>
        <begin position="418"/>
        <end position="423"/>
    </location>
</feature>
<feature type="helix" evidence="17">
    <location>
        <begin position="426"/>
        <end position="428"/>
    </location>
</feature>
<feature type="strand" evidence="17">
    <location>
        <begin position="429"/>
        <end position="435"/>
    </location>
</feature>
<feature type="strand" evidence="17">
    <location>
        <begin position="447"/>
        <end position="452"/>
    </location>
</feature>
<feature type="strand" evidence="17">
    <location>
        <begin position="457"/>
        <end position="461"/>
    </location>
</feature>
<feature type="strand" evidence="17">
    <location>
        <begin position="473"/>
        <end position="483"/>
    </location>
</feature>
<feature type="strand" evidence="17">
    <location>
        <begin position="489"/>
        <end position="500"/>
    </location>
</feature>
<feature type="strand" evidence="17">
    <location>
        <begin position="508"/>
        <end position="517"/>
    </location>
</feature>
<feature type="strand" evidence="17">
    <location>
        <begin position="528"/>
        <end position="531"/>
    </location>
</feature>
<feature type="turn" evidence="17">
    <location>
        <begin position="538"/>
        <end position="540"/>
    </location>
</feature>
<keyword id="KW-0002">3D-structure</keyword>
<keyword id="KW-0025">Alternative splicing</keyword>
<keyword id="KW-0067">ATP-binding</keyword>
<keyword id="KW-0130">Cell adhesion</keyword>
<keyword id="KW-0965">Cell junction</keyword>
<keyword id="KW-1003">Cell membrane</keyword>
<keyword id="KW-0966">Cell projection</keyword>
<keyword id="KW-0217">Developmental protein</keyword>
<keyword id="KW-0967">Endosome</keyword>
<keyword id="KW-0325">Glycoprotein</keyword>
<keyword id="KW-0418">Kinase</keyword>
<keyword id="KW-0472">Membrane</keyword>
<keyword id="KW-0524">Neurogenesis</keyword>
<keyword id="KW-0547">Nucleotide-binding</keyword>
<keyword id="KW-0597">Phosphoprotein</keyword>
<keyword id="KW-0628">Postsynaptic cell membrane</keyword>
<keyword id="KW-1267">Proteomics identification</keyword>
<keyword id="KW-0675">Receptor</keyword>
<keyword id="KW-1185">Reference proteome</keyword>
<keyword id="KW-0677">Repeat</keyword>
<keyword id="KW-0732">Signal</keyword>
<keyword id="KW-0770">Synapse</keyword>
<keyword id="KW-0808">Transferase</keyword>
<keyword id="KW-0812">Transmembrane</keyword>
<keyword id="KW-1133">Transmembrane helix</keyword>
<keyword id="KW-0829">Tyrosine-protein kinase</keyword>